<name>FLIW_BORBZ</name>
<keyword id="KW-1005">Bacterial flagellum biogenesis</keyword>
<keyword id="KW-0143">Chaperone</keyword>
<keyword id="KW-0963">Cytoplasm</keyword>
<keyword id="KW-0810">Translation regulation</keyword>
<comment type="function">
    <text evidence="1">Acts as an anti-CsrA protein, binds CsrA and prevents it from repressing translation of its target genes, one of which is flagellin. Binds to flagellin and participates in the assembly of the flagellum.</text>
</comment>
<comment type="subunit">
    <text evidence="1">Interacts with translational regulator CsrA and flagellin(s).</text>
</comment>
<comment type="subcellular location">
    <subcellularLocation>
        <location evidence="1">Cytoplasm</location>
    </subcellularLocation>
</comment>
<comment type="similarity">
    <text evidence="1">Belongs to the FliW family.</text>
</comment>
<dbReference type="EMBL" id="CP001205">
    <property type="protein sequence ID" value="ACK74471.1"/>
    <property type="molecule type" value="Genomic_DNA"/>
</dbReference>
<dbReference type="RefSeq" id="WP_002556781.1">
    <property type="nucleotide sequence ID" value="NC_011728.1"/>
</dbReference>
<dbReference type="SMR" id="B7J1B6"/>
<dbReference type="GeneID" id="56567610"/>
<dbReference type="KEGG" id="bbz:BbuZS7_0183"/>
<dbReference type="HOGENOM" id="CLU_112356_0_2_12"/>
<dbReference type="Proteomes" id="UP000006901">
    <property type="component" value="Chromosome"/>
</dbReference>
<dbReference type="GO" id="GO:0005737">
    <property type="term" value="C:cytoplasm"/>
    <property type="evidence" value="ECO:0007669"/>
    <property type="project" value="UniProtKB-SubCell"/>
</dbReference>
<dbReference type="GO" id="GO:0044780">
    <property type="term" value="P:bacterial-type flagellum assembly"/>
    <property type="evidence" value="ECO:0007669"/>
    <property type="project" value="UniProtKB-UniRule"/>
</dbReference>
<dbReference type="GO" id="GO:0006417">
    <property type="term" value="P:regulation of translation"/>
    <property type="evidence" value="ECO:0007669"/>
    <property type="project" value="UniProtKB-KW"/>
</dbReference>
<dbReference type="Gene3D" id="2.30.290.10">
    <property type="entry name" value="BH3618-like"/>
    <property type="match status" value="1"/>
</dbReference>
<dbReference type="HAMAP" id="MF_01185">
    <property type="entry name" value="FliW"/>
    <property type="match status" value="1"/>
</dbReference>
<dbReference type="InterPro" id="IPR003775">
    <property type="entry name" value="Flagellar_assembly_factor_FliW"/>
</dbReference>
<dbReference type="InterPro" id="IPR024046">
    <property type="entry name" value="Flagellar_assmbl_FliW_dom_sf"/>
</dbReference>
<dbReference type="NCBIfam" id="NF009793">
    <property type="entry name" value="PRK13285.1-1"/>
    <property type="match status" value="1"/>
</dbReference>
<dbReference type="PANTHER" id="PTHR39190">
    <property type="entry name" value="FLAGELLAR ASSEMBLY FACTOR FLIW"/>
    <property type="match status" value="1"/>
</dbReference>
<dbReference type="PANTHER" id="PTHR39190:SF1">
    <property type="entry name" value="FLAGELLAR ASSEMBLY FACTOR FLIW"/>
    <property type="match status" value="1"/>
</dbReference>
<dbReference type="Pfam" id="PF02623">
    <property type="entry name" value="FliW"/>
    <property type="match status" value="1"/>
</dbReference>
<dbReference type="SUPFAM" id="SSF141457">
    <property type="entry name" value="BH3618-like"/>
    <property type="match status" value="1"/>
</dbReference>
<accession>B7J1B6</accession>
<gene>
    <name evidence="1" type="primary">fliW</name>
    <name type="ordered locus">BbuZS7_0183</name>
</gene>
<protein>
    <recommendedName>
        <fullName evidence="1">Flagellar assembly factor FliW</fullName>
    </recommendedName>
</protein>
<organism>
    <name type="scientific">Borreliella burgdorferi (strain ZS7)</name>
    <name type="common">Borrelia burgdorferi</name>
    <dbReference type="NCBI Taxonomy" id="445985"/>
    <lineage>
        <taxon>Bacteria</taxon>
        <taxon>Pseudomonadati</taxon>
        <taxon>Spirochaetota</taxon>
        <taxon>Spirochaetia</taxon>
        <taxon>Spirochaetales</taxon>
        <taxon>Borreliaceae</taxon>
        <taxon>Borreliella</taxon>
    </lineage>
</organism>
<evidence type="ECO:0000255" key="1">
    <source>
        <dbReference type="HAMAP-Rule" id="MF_01185"/>
    </source>
</evidence>
<sequence length="130" mass="15203">MIDEKSIEFDFPEGILGFENIKKFIIKDSKYKPFSIMQSINKDVSFLVTSPFNFLSEYLPNIQEKDWSDIKAKEEDEKVILCIINMHVNDYKDITANLKAPIIINKKKLLGKQAICTNEKYSLHHKVFKE</sequence>
<reference key="1">
    <citation type="journal article" date="2011" name="J. Bacteriol.">
        <title>Whole-genome sequences of thirteen isolates of Borrelia burgdorferi.</title>
        <authorList>
            <person name="Schutzer S.E."/>
            <person name="Fraser-Liggett C.M."/>
            <person name="Casjens S.R."/>
            <person name="Qiu W.G."/>
            <person name="Dunn J.J."/>
            <person name="Mongodin E.F."/>
            <person name="Luft B.J."/>
        </authorList>
    </citation>
    <scope>NUCLEOTIDE SEQUENCE [LARGE SCALE GENOMIC DNA]</scope>
    <source>
        <strain>ZS7</strain>
    </source>
</reference>
<feature type="chain" id="PRO_1000138249" description="Flagellar assembly factor FliW">
    <location>
        <begin position="1"/>
        <end position="130"/>
    </location>
</feature>
<proteinExistence type="inferred from homology"/>